<organism>
    <name type="scientific">Mus musculus</name>
    <name type="common">Mouse</name>
    <dbReference type="NCBI Taxonomy" id="10090"/>
    <lineage>
        <taxon>Eukaryota</taxon>
        <taxon>Metazoa</taxon>
        <taxon>Chordata</taxon>
        <taxon>Craniata</taxon>
        <taxon>Vertebrata</taxon>
        <taxon>Euteleostomi</taxon>
        <taxon>Mammalia</taxon>
        <taxon>Eutheria</taxon>
        <taxon>Euarchontoglires</taxon>
        <taxon>Glires</taxon>
        <taxon>Rodentia</taxon>
        <taxon>Myomorpha</taxon>
        <taxon>Muroidea</taxon>
        <taxon>Muridae</taxon>
        <taxon>Murinae</taxon>
        <taxon>Mus</taxon>
        <taxon>Mus</taxon>
    </lineage>
</organism>
<sequence length="412" mass="47972">MNKHPWKNQLSEMVQPSGGPAEDQDMLGEESSLGKPAMLHLPSEQGTPETLQRCLEENQELRDAIRQSNQMLRERCEELLHFQVSQREEKEFLMCKFQEARKLVERLSLEKLDLRSQREQALKELEQLKKCQQQMAEDKASVKAQVTSLLGELQESQSRLEAATKDRQALEGRIRAVSEQVRQLESEREVLQQQHSVQVDQLRMQNQSVEAALRMERQAASEEKRKLAQLQAAYHQLFQDYDSHIKSSKGMQLEDLRQQLQQAEEALVAKQELIDKLKEEAEQHKIVMETVPVLKAQADIYKADFQAERHAREKLVEKKEYLQEQLEQLQREFNKLKVGCHESARIEDMRKRHVETPQPPLLPAPAHHSFHLALSNQRRSPPEEPPDFCCPKCQYQAPDMDTLQIHVMECIE</sequence>
<gene>
    <name type="primary">Ikbkg</name>
    <name type="synonym">Nemo</name>
</gene>
<comment type="function">
    <text evidence="2 15">Regulatory subunit of the IKK core complex which phosphorylates inhibitors of NF-kappa-B thus leading to the dissociation of the inhibitor/NF-kappa-B complex and ultimately the degradation of the inhibitor (PubMed:9927690). Its binding to scaffolding polyubiquitin plays a key role in IKK activation by multiple signaling receptor pathways. Can recognize and bind both 'Lys-63'-linked and linear polyubiquitin upon cell stimulation, with a much highr affinity for linear polyubiquitin. Could be implicated in NF-kappa-B-mediated protection from cytokine toxicity. Essential for viral activation of IRF3. Involved in TLR3- and IFIH1-mediated antiviral innate response; this function requires 'Lys-27'-linked polyubiquitination (By similarity).</text>
</comment>
<comment type="subunit">
    <text evidence="2 6 8 10 11 12 13 14">Homodimer; disulfide-linked (By similarity). Component of the I-kappa-B-kinase (IKK) core complex consisting of CHUK, IKBKB and IKBKG; probably four alpha/CHUK-beta/IKBKB dimers are associated with four gamma/IKBKG subunits (PubMed:11080499). The IKK core complex seems to associate with regulatory or adapter proteins to form a IKK-signalosome holo-complex (PubMed:11080499). The IKK complex associates with TERF2IP/RAP1, leading to promote IKK-mediated phosphorylation of RELA/p65 (PubMed:20622870). Part of a complex composed of NCOA2, NCOA3, CHUK/IKKA, IKBKB, IKBKG and CREBBP (By similarity). Interacts with COPS3, CYLD, NALP2, TRPC4AP and PIDD1 (By similarity). Interacts with ATM; the complex is exported from the nucleus (By similarity). Interacts with TRAF6 (By similarity). Interacts with IKBKE (By similarity). Interacts with TANK; the interaction is enhanced by IKBKE and TBK1 (By similarity). Part of a ternary complex consisting of TANK, IKBKB and IKBKG (PubMed:12133833). Interacts with ZFAND5 (By similarity). Interacts with RIPK2 (By similarity). Interacts with TNIP1 and TNFAIP3; TNIP1 facilitates the TNFAIP3-mediated de-ubiquitination of IKBKG (By similarity). Interacts with TNFAIP3; the interaction is induced by TNF stimulation and by polyubiquitin (By similarity). Binds (via UBAN region) polyubiquitin; binds both 'Lys-63'-linked and linear polyubiquitin, with higher affinity for linear ubiquitin (PubMed:19303852, PubMed:19854204). Interacts with NLRP10 (By similarity). Interacts with TANK; this interaction increases in response to DNA damage (By similarity). Interacts with USP10; this interaction increases in response to DNA damage (By similarity). Interacts with ZC3H12A; this interaction increases in response to DNA damage (By similarity). Interacts with IFIT5; the interaction synergizes the recruitment of IKK to MAP3K7 and enhances IKK phosphorylation (By similarity). Interacts with TRIM29; this interaction induces IKBKG/NEMO ubiquitination and proteolytic degradation (By similarity). Interacts with TRIM13; this interaction leads to IKBKG/NEMO ubiquitination (By similarity). Interacts with ARFIP2 (By similarity). Interacts with RIPK1 (PubMed:31519886). Interacts with (ubiquitinated) BCL10; interaction with polyubiquitinated BCL10 via both 'Lys-63'-linked and linear ubiquitin is required for TCR-induced NF-kappa-B activation (By similarity). Interacts with MARCHF2; during the late stages of macrophage viral and bacterial infection; the interaction leads to ubiquitination and degradation of IKBKG/NEMO (PubMed:32935379).</text>
</comment>
<comment type="interaction">
    <interactant intactId="EBI-998011">
        <id>O88522</id>
    </interactant>
    <interactant intactId="EBI-646245">
        <id>Q60680</id>
        <label>Chuk</label>
    </interactant>
    <organismsDiffer>false</organismsDiffer>
    <experiments>6</experiments>
</comment>
<comment type="interaction">
    <interactant intactId="EBI-998011">
        <id>O88522</id>
    </interactant>
    <interactant intactId="EBI-447960">
        <id>O88351</id>
        <label>Ikbkb</label>
    </interactant>
    <organismsDiffer>false</organismsDiffer>
    <experiments>8</experiments>
</comment>
<comment type="interaction">
    <interactant intactId="EBI-998011">
        <id>O88522</id>
    </interactant>
    <interactant intactId="EBI-998011">
        <id>O88522</id>
        <label>Ikbkg</label>
    </interactant>
    <organismsDiffer>false</organismsDiffer>
    <experiments>2</experiments>
</comment>
<comment type="interaction">
    <interactant intactId="EBI-998011">
        <id>O88522</id>
    </interactant>
    <interactant intactId="EBI-647680">
        <id>Q924T7</id>
        <label>Rnf31</label>
    </interactant>
    <organismsDiffer>false</organismsDiffer>
    <experiments>7</experiments>
</comment>
<comment type="interaction">
    <interactant intactId="EBI-998011">
        <id>O88522</id>
    </interactant>
    <interactant intactId="EBI-413074">
        <id>P62991</id>
        <label>Ubc</label>
    </interactant>
    <organismsDiffer>false</organismsDiffer>
    <experiments>3</experiments>
</comment>
<comment type="interaction">
    <interactant intactId="EBI-998011">
        <id>O88522</id>
    </interactant>
    <interactant intactId="EBI-4291651">
        <id>P24772</id>
        <label>OPG200</label>
    </interactant>
    <organismsDiffer>true</organismsDiffer>
    <experiments>2</experiments>
</comment>
<comment type="interaction">
    <interactant intactId="EBI-998011">
        <id>O88522</id>
    </interactant>
    <interactant intactId="EBI-3390054">
        <id>P0CG48</id>
        <label>UBC</label>
    </interactant>
    <organismsDiffer>true</organismsDiffer>
    <experiments>3</experiments>
</comment>
<comment type="subcellular location">
    <subcellularLocation>
        <location evidence="2">Cytoplasm</location>
    </subcellularLocation>
    <subcellularLocation>
        <location evidence="2">Nucleus</location>
    </subcellularLocation>
    <text evidence="2">Sumoylated NEMO accumulates in the nucleus in response to genotoxic stress.</text>
</comment>
<comment type="domain">
    <text evidence="2">The leucine-zipper domain and the CCHC NOA-type zinc-fingers constitute the UBAN region and are essential for polyubiquitin binding and for the activation of IRF3.</text>
</comment>
<comment type="PTM">
    <text evidence="2">Phosphorylation at Ser-68 attenuates aminoterminal homodimerization.</text>
</comment>
<comment type="PTM">
    <text evidence="2">Polyubiquitinated on Lys-278 via 'Lys-63'-linked ubiquitin; the ubiquitination is mediated downstream of NOD2 and RIPK2 and probably plays a role in signaling by facilitating interactions with ubiquitin domain-containing proteins and activates the NF-kappa-B pathway (By similarity). Polyubiquitinated on Lys-278 and Lys-302 through 'Lys-63'-linked ubiquitin; the ubiquitination is mediated by BCL10, MALT1 and TRAF6 and probably plays a role in signaling by facilitating interactions with ubiquitin domain-containing proteins and activates the NF-kappa-B pathway (By similarity). Monoubiquitinated on Lys-270 and Lys-302; promotes nuclear export (By similarity). Polyubiquitinated through 'Lys-27' by TRIM23; involved in antiviral innate and inflammatory responses (By similarity). Linear polyubiquitinated on Lys-111, Lys-143, Lys-226, Lys-246, Lys-270, Lys-278, Lys-285, Lys-295, Lys-302 and Lys-319; the head-to-tail polyubiquitination is mediated by the LUBAC complex and plays a key role in NF-kappa-B activation (By similarity). Deubiquitinated by USP10 in a TANK-dependent and -independent manner, leading to the negative regulation of NF-kappa-B signaling upon DNA damage (By similarity). Ubiquitinated at Lys-319 by MARCHF2 following bacterial and viral infection which leads to its degradation (By similarity). Polyubiquitinated via 'Lys-29'-linked ubiquitin; leading to lysosomal degradation (By similarity).</text>
</comment>
<comment type="PTM">
    <text evidence="2">Sumoylated on Lys-270 and Lys-302 with SUMO1; the modification results in phosphorylation of Ser-85 by ATM leading to a replacement of the sumoylation by mono-ubiquitination on these residues.</text>
</comment>
<comment type="PTM">
    <text evidence="2">Neddylated by TRIM40, resulting in stabilization of NFKBIA and down-regulation of NF-kappa-B activity.</text>
</comment>
<dbReference type="EMBL" id="AF069542">
    <property type="protein sequence ID" value="AAC40153.1"/>
    <property type="molecule type" value="mRNA"/>
</dbReference>
<dbReference type="EMBL" id="AF326207">
    <property type="protein sequence ID" value="AAK69186.1"/>
    <property type="molecule type" value="Genomic_DNA"/>
</dbReference>
<dbReference type="EMBL" id="AF513109">
    <property type="protein sequence ID" value="AAP47160.1"/>
    <property type="molecule type" value="mRNA"/>
</dbReference>
<dbReference type="EMBL" id="AK154095">
    <property type="protein sequence ID" value="BAE32372.1"/>
    <property type="molecule type" value="mRNA"/>
</dbReference>
<dbReference type="EMBL" id="AL669976">
    <property type="status" value="NOT_ANNOTATED_CDS"/>
    <property type="molecule type" value="Genomic_DNA"/>
</dbReference>
<dbReference type="EMBL" id="CH466650">
    <property type="protein sequence ID" value="EDL29810.1"/>
    <property type="molecule type" value="Genomic_DNA"/>
</dbReference>
<dbReference type="CCDS" id="CCDS41023.1"/>
<dbReference type="RefSeq" id="NP_001154895.1">
    <property type="nucleotide sequence ID" value="NM_001161423.1"/>
</dbReference>
<dbReference type="RefSeq" id="NP_034677.2">
    <property type="nucleotide sequence ID" value="NM_010547.2"/>
</dbReference>
<dbReference type="RefSeq" id="XP_006527913.1">
    <property type="nucleotide sequence ID" value="XM_006527850.4"/>
</dbReference>
<dbReference type="RefSeq" id="XP_006527914.1">
    <property type="nucleotide sequence ID" value="XM_006527851.4"/>
</dbReference>
<dbReference type="RefSeq" id="XP_006527915.1">
    <property type="nucleotide sequence ID" value="XM_006527852.4"/>
</dbReference>
<dbReference type="RefSeq" id="XP_011245829.1">
    <property type="nucleotide sequence ID" value="XM_011247527.4"/>
</dbReference>
<dbReference type="PDB" id="2V4H">
    <property type="method" value="X-ray"/>
    <property type="resolution" value="2.90 A"/>
    <property type="chains" value="A/B=251-337"/>
</dbReference>
<dbReference type="PDB" id="2ZVN">
    <property type="method" value="X-ray"/>
    <property type="resolution" value="3.00 A"/>
    <property type="chains" value="B/D/F/H=253-337"/>
</dbReference>
<dbReference type="PDB" id="2ZVO">
    <property type="method" value="X-ray"/>
    <property type="resolution" value="2.90 A"/>
    <property type="chains" value="B/D=250-339"/>
</dbReference>
<dbReference type="PDB" id="3F89">
    <property type="method" value="X-ray"/>
    <property type="resolution" value="2.80 A"/>
    <property type="chains" value="A/B=250-339"/>
</dbReference>
<dbReference type="PDB" id="3JSV">
    <property type="method" value="X-ray"/>
    <property type="resolution" value="2.70 A"/>
    <property type="chains" value="C/D=250-343"/>
</dbReference>
<dbReference type="PDB" id="4OWF">
    <property type="method" value="X-ray"/>
    <property type="resolution" value="2.00 A"/>
    <property type="chains" value="A/B=250-339"/>
</dbReference>
<dbReference type="PDBsum" id="2V4H"/>
<dbReference type="PDBsum" id="2ZVN"/>
<dbReference type="PDBsum" id="2ZVO"/>
<dbReference type="PDBsum" id="3F89"/>
<dbReference type="PDBsum" id="3JSV"/>
<dbReference type="PDBsum" id="4OWF"/>
<dbReference type="BMRB" id="O88522"/>
<dbReference type="SMR" id="O88522"/>
<dbReference type="BioGRID" id="200602">
    <property type="interactions" value="57"/>
</dbReference>
<dbReference type="ComplexPortal" id="CPX-3270">
    <property type="entry name" value="IkappaB kinase complex"/>
</dbReference>
<dbReference type="CORUM" id="O88522"/>
<dbReference type="DIP" id="DIP-29811N"/>
<dbReference type="FunCoup" id="O88522">
    <property type="interactions" value="1764"/>
</dbReference>
<dbReference type="IntAct" id="O88522">
    <property type="interactions" value="27"/>
</dbReference>
<dbReference type="MINT" id="O88522"/>
<dbReference type="STRING" id="10090.ENSMUSP00000004330"/>
<dbReference type="ChEMBL" id="CHEMBL4524000"/>
<dbReference type="iPTMnet" id="O88522"/>
<dbReference type="PhosphoSitePlus" id="O88522"/>
<dbReference type="jPOST" id="O88522"/>
<dbReference type="PaxDb" id="10090-ENSMUSP00000109762"/>
<dbReference type="ProteomicsDB" id="252822"/>
<dbReference type="Pumba" id="O88522"/>
<dbReference type="Antibodypedia" id="73338">
    <property type="antibodies" value="1264 antibodies from 48 providers"/>
</dbReference>
<dbReference type="DNASU" id="16151"/>
<dbReference type="Ensembl" id="ENSMUST00000114127.8">
    <property type="protein sequence ID" value="ENSMUSP00000109762.2"/>
    <property type="gene ID" value="ENSMUSG00000004221.17"/>
</dbReference>
<dbReference type="Ensembl" id="ENSMUST00000114128.8">
    <property type="protein sequence ID" value="ENSMUSP00000109763.2"/>
    <property type="gene ID" value="ENSMUSG00000004221.17"/>
</dbReference>
<dbReference type="Ensembl" id="ENSMUST00000114133.9">
    <property type="protein sequence ID" value="ENSMUSP00000109768.3"/>
    <property type="gene ID" value="ENSMUSG00000004221.17"/>
</dbReference>
<dbReference type="Ensembl" id="ENSMUST00000164101.8">
    <property type="protein sequence ID" value="ENSMUSP00000126770.2"/>
    <property type="gene ID" value="ENSMUSG00000004221.17"/>
</dbReference>
<dbReference type="GeneID" id="16151"/>
<dbReference type="KEGG" id="mmu:16151"/>
<dbReference type="UCSC" id="uc009toz.2">
    <property type="organism name" value="mouse"/>
</dbReference>
<dbReference type="AGR" id="MGI:1338074"/>
<dbReference type="CTD" id="8517"/>
<dbReference type="MGI" id="MGI:1338074">
    <property type="gene designation" value="Ikbkg"/>
</dbReference>
<dbReference type="VEuPathDB" id="HostDB:ENSMUSG00000004221"/>
<dbReference type="eggNOG" id="ENOG502R4ZD">
    <property type="taxonomic scope" value="Eukaryota"/>
</dbReference>
<dbReference type="GeneTree" id="ENSGT00530000063808"/>
<dbReference type="HOGENOM" id="CLU_034097_0_0_1"/>
<dbReference type="InParanoid" id="O88522"/>
<dbReference type="OMA" id="VAMRKNF"/>
<dbReference type="OrthoDB" id="6343844at2759"/>
<dbReference type="TreeFam" id="TF326608"/>
<dbReference type="Reactome" id="R-MMU-1169091">
    <property type="pathway name" value="Activation of NF-kappaB in B cells"/>
</dbReference>
<dbReference type="Reactome" id="R-MMU-168638">
    <property type="pathway name" value="NOD1/2 Signaling Pathway"/>
</dbReference>
<dbReference type="Reactome" id="R-MMU-1810476">
    <property type="pathway name" value="RIP-mediated NFkB activation via ZBP1"/>
</dbReference>
<dbReference type="Reactome" id="R-MMU-202424">
    <property type="pathway name" value="Downstream TCR signaling"/>
</dbReference>
<dbReference type="Reactome" id="R-MMU-2871837">
    <property type="pathway name" value="FCERI mediated NF-kB activation"/>
</dbReference>
<dbReference type="Reactome" id="R-MMU-445989">
    <property type="pathway name" value="TAK1-dependent IKK and NF-kappa-B activation"/>
</dbReference>
<dbReference type="Reactome" id="R-MMU-450302">
    <property type="pathway name" value="activated TAK1 mediates p38 MAPK activation"/>
</dbReference>
<dbReference type="Reactome" id="R-MMU-450321">
    <property type="pathway name" value="JNK (c-Jun kinases) phosphorylation and activation mediated by activated human TAK1"/>
</dbReference>
<dbReference type="Reactome" id="R-MMU-4755510">
    <property type="pathway name" value="SUMOylation of immune response proteins"/>
</dbReference>
<dbReference type="Reactome" id="R-MMU-5357905">
    <property type="pathway name" value="Regulation of TNFR1 signaling"/>
</dbReference>
<dbReference type="Reactome" id="R-MMU-5357956">
    <property type="pathway name" value="TNFR1-induced NF-kappa-B signaling pathway"/>
</dbReference>
<dbReference type="Reactome" id="R-MMU-5607764">
    <property type="pathway name" value="CLEC7A (Dectin-1) signaling"/>
</dbReference>
<dbReference type="Reactome" id="R-MMU-5684264">
    <property type="pathway name" value="MAP3K8 (TPL2)-dependent MAPK1/3 activation"/>
</dbReference>
<dbReference type="Reactome" id="R-MMU-5689880">
    <property type="pathway name" value="Ub-specific processing proteases"/>
</dbReference>
<dbReference type="Reactome" id="R-MMU-5689896">
    <property type="pathway name" value="Ovarian tumor domain proteases"/>
</dbReference>
<dbReference type="Reactome" id="R-MMU-9020702">
    <property type="pathway name" value="Interleukin-1 signaling"/>
</dbReference>
<dbReference type="Reactome" id="R-MMU-933542">
    <property type="pathway name" value="TRAF6 mediated NF-kB activation"/>
</dbReference>
<dbReference type="Reactome" id="R-MMU-937039">
    <property type="pathway name" value="IRAK1 recruits IKK complex"/>
</dbReference>
<dbReference type="Reactome" id="R-MMU-937041">
    <property type="pathway name" value="IKK complex recruitment mediated by RIP1"/>
</dbReference>
<dbReference type="Reactome" id="R-MMU-975144">
    <property type="pathway name" value="IRAK1 recruits IKK complex upon TLR7/8 or 9 stimulation"/>
</dbReference>
<dbReference type="Reactome" id="R-MMU-9758274">
    <property type="pathway name" value="Regulation of NF-kappa B signaling"/>
</dbReference>
<dbReference type="Reactome" id="R-MMU-9833482">
    <property type="pathway name" value="PKR-mediated signaling"/>
</dbReference>
<dbReference type="Reactome" id="R-MMU-9860276">
    <property type="pathway name" value="SLC15A4:TASL-dependent IRF5 activation"/>
</dbReference>
<dbReference type="Reactome" id="R-MMU-9860927">
    <property type="pathway name" value="Turbulent (oscillatory, disturbed) flow shear stress activates signaling by PIEZO1 and integrins in endothelial cells"/>
</dbReference>
<dbReference type="Reactome" id="R-MMU-9909505">
    <property type="pathway name" value="Modulation of host responses by IFN-stimulated genes"/>
</dbReference>
<dbReference type="BioGRID-ORCS" id="16151">
    <property type="hits" value="28 hits in 84 CRISPR screens"/>
</dbReference>
<dbReference type="ChiTaRS" id="Ikbkg">
    <property type="organism name" value="mouse"/>
</dbReference>
<dbReference type="EvolutionaryTrace" id="O88522"/>
<dbReference type="PRO" id="PR:O88522"/>
<dbReference type="Proteomes" id="UP000000589">
    <property type="component" value="Chromosome X"/>
</dbReference>
<dbReference type="RNAct" id="O88522">
    <property type="molecule type" value="protein"/>
</dbReference>
<dbReference type="Bgee" id="ENSMUSG00000004221">
    <property type="expression patterns" value="Expressed in left lobe of liver and 268 other cell types or tissues"/>
</dbReference>
<dbReference type="ExpressionAtlas" id="O88522">
    <property type="expression patterns" value="baseline and differential"/>
</dbReference>
<dbReference type="GO" id="GO:0005737">
    <property type="term" value="C:cytoplasm"/>
    <property type="evidence" value="ECO:0000314"/>
    <property type="project" value="MGI"/>
</dbReference>
<dbReference type="GO" id="GO:0008385">
    <property type="term" value="C:IkappaB kinase complex"/>
    <property type="evidence" value="ECO:0000353"/>
    <property type="project" value="ComplexPortal"/>
</dbReference>
<dbReference type="GO" id="GO:0072686">
    <property type="term" value="C:mitotic spindle"/>
    <property type="evidence" value="ECO:0007669"/>
    <property type="project" value="Ensembl"/>
</dbReference>
<dbReference type="GO" id="GO:0005634">
    <property type="term" value="C:nucleus"/>
    <property type="evidence" value="ECO:0007669"/>
    <property type="project" value="UniProtKB-SubCell"/>
</dbReference>
<dbReference type="GO" id="GO:0000922">
    <property type="term" value="C:spindle pole"/>
    <property type="evidence" value="ECO:0007669"/>
    <property type="project" value="Ensembl"/>
</dbReference>
<dbReference type="GO" id="GO:0000151">
    <property type="term" value="C:ubiquitin ligase complex"/>
    <property type="evidence" value="ECO:0007669"/>
    <property type="project" value="Ensembl"/>
</dbReference>
<dbReference type="GO" id="GO:0042802">
    <property type="term" value="F:identical protein binding"/>
    <property type="evidence" value="ECO:0000353"/>
    <property type="project" value="IntAct"/>
</dbReference>
<dbReference type="GO" id="GO:0070530">
    <property type="term" value="F:K63-linked polyubiquitin modification-dependent protein binding"/>
    <property type="evidence" value="ECO:0000314"/>
    <property type="project" value="MGI"/>
</dbReference>
<dbReference type="GO" id="GO:1990450">
    <property type="term" value="F:linear polyubiquitin binding"/>
    <property type="evidence" value="ECO:0000250"/>
    <property type="project" value="UniProtKB"/>
</dbReference>
<dbReference type="GO" id="GO:0019904">
    <property type="term" value="F:protein domain specific binding"/>
    <property type="evidence" value="ECO:0007669"/>
    <property type="project" value="Ensembl"/>
</dbReference>
<dbReference type="GO" id="GO:0046982">
    <property type="term" value="F:protein heterodimerization activity"/>
    <property type="evidence" value="ECO:0000250"/>
    <property type="project" value="UniProtKB"/>
</dbReference>
<dbReference type="GO" id="GO:0042803">
    <property type="term" value="F:protein homodimerization activity"/>
    <property type="evidence" value="ECO:0000250"/>
    <property type="project" value="UniProtKB"/>
</dbReference>
<dbReference type="GO" id="GO:0035591">
    <property type="term" value="F:signaling adaptor activity"/>
    <property type="evidence" value="ECO:0000314"/>
    <property type="project" value="MGI"/>
</dbReference>
<dbReference type="GO" id="GO:1990459">
    <property type="term" value="F:transferrin receptor binding"/>
    <property type="evidence" value="ECO:0007669"/>
    <property type="project" value="Ensembl"/>
</dbReference>
<dbReference type="GO" id="GO:0031625">
    <property type="term" value="F:ubiquitin protein ligase binding"/>
    <property type="evidence" value="ECO:0007669"/>
    <property type="project" value="Ensembl"/>
</dbReference>
<dbReference type="GO" id="GO:0008270">
    <property type="term" value="F:zinc ion binding"/>
    <property type="evidence" value="ECO:0007669"/>
    <property type="project" value="UniProtKB-KW"/>
</dbReference>
<dbReference type="GO" id="GO:0043276">
    <property type="term" value="P:anoikis"/>
    <property type="evidence" value="ECO:0000315"/>
    <property type="project" value="ParkinsonsUK-UCL"/>
</dbReference>
<dbReference type="GO" id="GO:0001782">
    <property type="term" value="P:B cell homeostasis"/>
    <property type="evidence" value="ECO:0000315"/>
    <property type="project" value="MGI"/>
</dbReference>
<dbReference type="GO" id="GO:0007249">
    <property type="term" value="P:canonical NF-kappaB signal transduction"/>
    <property type="evidence" value="ECO:0000314"/>
    <property type="project" value="ComplexPortal"/>
</dbReference>
<dbReference type="GO" id="GO:0042742">
    <property type="term" value="P:defense response to bacterium"/>
    <property type="evidence" value="ECO:0007669"/>
    <property type="project" value="Ensembl"/>
</dbReference>
<dbReference type="GO" id="GO:0006974">
    <property type="term" value="P:DNA damage response"/>
    <property type="evidence" value="ECO:0000250"/>
    <property type="project" value="UniProtKB"/>
</dbReference>
<dbReference type="GO" id="GO:0051650">
    <property type="term" value="P:establishment of vesicle localization"/>
    <property type="evidence" value="ECO:0007669"/>
    <property type="project" value="Ensembl"/>
</dbReference>
<dbReference type="GO" id="GO:1902236">
    <property type="term" value="P:negative regulation of endoplasmic reticulum stress-induced intrinsic apoptotic signaling pathway"/>
    <property type="evidence" value="ECO:0000315"/>
    <property type="project" value="ParkinsonsUK-UCL"/>
</dbReference>
<dbReference type="GO" id="GO:0043123">
    <property type="term" value="P:positive regulation of canonical NF-kappaB signal transduction"/>
    <property type="evidence" value="ECO:0000314"/>
    <property type="project" value="MGI"/>
</dbReference>
<dbReference type="GO" id="GO:0010628">
    <property type="term" value="P:positive regulation of gene expression"/>
    <property type="evidence" value="ECO:0000316"/>
    <property type="project" value="ParkinsonsUK-UCL"/>
</dbReference>
<dbReference type="GO" id="GO:0016239">
    <property type="term" value="P:positive regulation of macroautophagy"/>
    <property type="evidence" value="ECO:0000315"/>
    <property type="project" value="ParkinsonsUK-UCL"/>
</dbReference>
<dbReference type="GO" id="GO:0051092">
    <property type="term" value="P:positive regulation of NF-kappaB transcription factor activity"/>
    <property type="evidence" value="ECO:0000250"/>
    <property type="project" value="UniProtKB"/>
</dbReference>
<dbReference type="GO" id="GO:0050862">
    <property type="term" value="P:positive regulation of T cell receptor signaling pathway"/>
    <property type="evidence" value="ECO:0000250"/>
    <property type="project" value="UniProtKB"/>
</dbReference>
<dbReference type="GO" id="GO:0045944">
    <property type="term" value="P:positive regulation of transcription by RNA polymerase II"/>
    <property type="evidence" value="ECO:0000250"/>
    <property type="project" value="UniProtKB"/>
</dbReference>
<dbReference type="GO" id="GO:0065003">
    <property type="term" value="P:protein-containing complex assembly"/>
    <property type="evidence" value="ECO:0007669"/>
    <property type="project" value="Ensembl"/>
</dbReference>
<dbReference type="GO" id="GO:0033209">
    <property type="term" value="P:tumor necrosis factor-mediated signaling pathway"/>
    <property type="evidence" value="ECO:0000304"/>
    <property type="project" value="MGI"/>
</dbReference>
<dbReference type="CDD" id="cd09803">
    <property type="entry name" value="UBAN"/>
    <property type="match status" value="1"/>
</dbReference>
<dbReference type="FunFam" id="1.20.5.390:FF:000002">
    <property type="entry name" value="NF-kappa-B essential modulator isoform X1"/>
    <property type="match status" value="1"/>
</dbReference>
<dbReference type="FunFam" id="1.20.5.390:FF:000003">
    <property type="entry name" value="NF-kappa-B essential modulator isoform X1"/>
    <property type="match status" value="1"/>
</dbReference>
<dbReference type="FunFam" id="1.20.5.990:FF:000003">
    <property type="entry name" value="NF-kappa-B essential modulator isoform X1"/>
    <property type="match status" value="1"/>
</dbReference>
<dbReference type="Gene3D" id="1.20.5.390">
    <property type="entry name" value="L1 transposable element, trimerization domain"/>
    <property type="match status" value="2"/>
</dbReference>
<dbReference type="Gene3D" id="1.20.5.990">
    <property type="entry name" value="Nemo cc2-lz domain - 1d5 darpin complex"/>
    <property type="match status" value="1"/>
</dbReference>
<dbReference type="InterPro" id="IPR032419">
    <property type="entry name" value="CC2-LZ_dom"/>
</dbReference>
<dbReference type="InterPro" id="IPR021063">
    <property type="entry name" value="NEMO_N"/>
</dbReference>
<dbReference type="InterPro" id="IPR034735">
    <property type="entry name" value="NEMO_ZF"/>
</dbReference>
<dbReference type="InterPro" id="IPR051301">
    <property type="entry name" value="Optineurin/NFkB_EssMod"/>
</dbReference>
<dbReference type="PANTHER" id="PTHR31553">
    <property type="entry name" value="NF-KAPPA-B ESSENTIAL MODULATOR"/>
    <property type="match status" value="1"/>
</dbReference>
<dbReference type="PANTHER" id="PTHR31553:SF3">
    <property type="entry name" value="NF-KAPPA-B ESSENTIAL MODULATOR"/>
    <property type="match status" value="1"/>
</dbReference>
<dbReference type="Pfam" id="PF16516">
    <property type="entry name" value="CC2-LZ"/>
    <property type="match status" value="1"/>
</dbReference>
<dbReference type="Pfam" id="PF11577">
    <property type="entry name" value="NEMO"/>
    <property type="match status" value="1"/>
</dbReference>
<dbReference type="Pfam" id="PF18414">
    <property type="entry name" value="zf_C2H2_10"/>
    <property type="match status" value="1"/>
</dbReference>
<dbReference type="PROSITE" id="PS51801">
    <property type="entry name" value="ZF_CCHC_NOA"/>
    <property type="match status" value="1"/>
</dbReference>
<accession>O88522</accession>
<accession>Q924H4</accession>
<evidence type="ECO:0000250" key="1"/>
<evidence type="ECO:0000250" key="2">
    <source>
        <dbReference type="UniProtKB" id="Q9Y6K9"/>
    </source>
</evidence>
<evidence type="ECO:0000255" key="3"/>
<evidence type="ECO:0000255" key="4">
    <source>
        <dbReference type="PROSITE-ProRule" id="PRU01142"/>
    </source>
</evidence>
<evidence type="ECO:0000256" key="5">
    <source>
        <dbReference type="SAM" id="MobiDB-lite"/>
    </source>
</evidence>
<evidence type="ECO:0000269" key="6">
    <source>
    </source>
</evidence>
<evidence type="ECO:0000269" key="7">
    <source>
    </source>
</evidence>
<evidence type="ECO:0000269" key="8">
    <source>
    </source>
</evidence>
<evidence type="ECO:0000269" key="9">
    <source>
    </source>
</evidence>
<evidence type="ECO:0000269" key="10">
    <source>
    </source>
</evidence>
<evidence type="ECO:0000269" key="11">
    <source>
    </source>
</evidence>
<evidence type="ECO:0000269" key="12">
    <source>
    </source>
</evidence>
<evidence type="ECO:0000269" key="13">
    <source>
    </source>
</evidence>
<evidence type="ECO:0000269" key="14">
    <source>
    </source>
</evidence>
<evidence type="ECO:0000269" key="15">
    <source>
    </source>
</evidence>
<evidence type="ECO:0000305" key="16"/>
<evidence type="ECO:0007744" key="17">
    <source>
    </source>
</evidence>
<evidence type="ECO:0007829" key="18">
    <source>
        <dbReference type="PDB" id="3JSV"/>
    </source>
</evidence>
<evidence type="ECO:0007829" key="19">
    <source>
        <dbReference type="PDB" id="4OWF"/>
    </source>
</evidence>
<name>NEMO_MOUSE</name>
<feature type="chain" id="PRO_0000096783" description="NF-kappa-B essential modulator">
    <location>
        <begin position="1"/>
        <end position="412"/>
    </location>
</feature>
<feature type="zinc finger region" description="CCHC NOA-type" evidence="4">
    <location>
        <begin position="382"/>
        <end position="412"/>
    </location>
</feature>
<feature type="region of interest" description="Required for interaction with and ubiquitination by MARCHF2" evidence="2">
    <location>
        <begin position="1"/>
        <end position="197"/>
    </location>
</feature>
<feature type="region of interest" description="Disordered" evidence="5">
    <location>
        <begin position="1"/>
        <end position="48"/>
    </location>
</feature>
<feature type="region of interest" description="Interaction with CHUK/IKBKB" evidence="1">
    <location>
        <begin position="44"/>
        <end position="111"/>
    </location>
</feature>
<feature type="region of interest" description="Interaction with TANK" evidence="8">
    <location>
        <begin position="150"/>
        <end position="250"/>
    </location>
</feature>
<feature type="region of interest" description="Ubiquitin-binding (UBAN)">
    <location>
        <begin position="242"/>
        <end position="343"/>
    </location>
</feature>
<feature type="region of interest" description="Self-association" evidence="1">
    <location>
        <begin position="246"/>
        <end position="358"/>
    </location>
</feature>
<feature type="region of interest" description="Required for interaction with TNFAIP3" evidence="1">
    <location>
        <begin position="249"/>
        <end position="412"/>
    </location>
</feature>
<feature type="region of interest" description="Linear polyubiquitin-binding, does not bind to 'Lys-63'-linked polyubiquitin">
    <location>
        <begin position="250"/>
        <end position="339"/>
    </location>
</feature>
<feature type="region of interest" description="Leucine-zipper" evidence="3">
    <location>
        <begin position="315"/>
        <end position="336"/>
    </location>
</feature>
<feature type="region of interest" description="Interaction with CYLD" evidence="1">
    <location>
        <begin position="375"/>
        <end position="412"/>
    </location>
</feature>
<feature type="coiled-coil region" evidence="3">
    <location>
        <begin position="49"/>
        <end position="345"/>
    </location>
</feature>
<feature type="binding site" evidence="4">
    <location>
        <position position="390"/>
    </location>
    <ligand>
        <name>Zn(2+)</name>
        <dbReference type="ChEBI" id="CHEBI:29105"/>
    </ligand>
</feature>
<feature type="binding site" evidence="4">
    <location>
        <position position="393"/>
    </location>
    <ligand>
        <name>Zn(2+)</name>
        <dbReference type="ChEBI" id="CHEBI:29105"/>
    </ligand>
</feature>
<feature type="binding site" evidence="4">
    <location>
        <position position="406"/>
    </location>
    <ligand>
        <name>Zn(2+)</name>
        <dbReference type="ChEBI" id="CHEBI:29105"/>
    </ligand>
</feature>
<feature type="binding site" evidence="4">
    <location>
        <position position="410"/>
    </location>
    <ligand>
        <name>Zn(2+)</name>
        <dbReference type="ChEBI" id="CHEBI:29105"/>
    </ligand>
</feature>
<feature type="modified residue" description="Phosphoserine; by IKKB" evidence="2">
    <location>
        <position position="31"/>
    </location>
</feature>
<feature type="modified residue" description="Phosphoserine; by IKKB" evidence="2">
    <location>
        <position position="43"/>
    </location>
</feature>
<feature type="modified residue" description="Phosphoserine" evidence="2">
    <location>
        <position position="68"/>
    </location>
</feature>
<feature type="modified residue" description="Phosphoserine; by ATM" evidence="2">
    <location>
        <position position="85"/>
    </location>
</feature>
<feature type="modified residue" description="Phosphoserine; by IKKB" evidence="7">
    <location>
        <position position="369"/>
    </location>
</feature>
<feature type="modified residue" description="Phosphoserine" evidence="17">
    <location>
        <position position="380"/>
    </location>
</feature>
<feature type="disulfide bond" description="Interchain" evidence="1">
    <location>
        <position position="54"/>
    </location>
</feature>
<feature type="disulfide bond" description="Interchain" evidence="1">
    <location>
        <position position="340"/>
    </location>
</feature>
<feature type="cross-link" description="Glycyl lysine isopeptide (Lys-Gly) (interchain with G-Cter in ubiquitin)" evidence="2">
    <location>
        <position position="111"/>
    </location>
</feature>
<feature type="cross-link" description="Glycyl lysine isopeptide (Lys-Gly) (interchain with G-Cter in ubiquitin)" evidence="2">
    <location>
        <position position="139"/>
    </location>
</feature>
<feature type="cross-link" description="Glycyl lysine isopeptide (Lys-Gly) (interchain with G-Cter in ubiquitin)" evidence="2">
    <location>
        <position position="143"/>
    </location>
</feature>
<feature type="cross-link" description="Glycyl lysine isopeptide (Lys-Gly) (interchain with G-Cter in ubiquitin)" evidence="2">
    <location>
        <position position="226"/>
    </location>
</feature>
<feature type="cross-link" description="Glycyl lysine isopeptide (Lys-Gly) (interchain with G-Cter in ubiquitin)" evidence="2">
    <location>
        <position position="246"/>
    </location>
</feature>
<feature type="cross-link" description="Glycyl lysine isopeptide (Lys-Gly) (interchain with G-Cter in SUMO); alternate" evidence="1">
    <location>
        <position position="270"/>
    </location>
</feature>
<feature type="cross-link" description="Glycyl lysine isopeptide (Lys-Gly) (interchain with G-Cter in ubiquitin); alternate" evidence="2">
    <location>
        <position position="270"/>
    </location>
</feature>
<feature type="cross-link" description="Glycyl lysine isopeptide (Lys-Gly) (interchain with G-Cter in ubiquitin)" evidence="2">
    <location>
        <position position="276"/>
    </location>
</feature>
<feature type="cross-link" description="Glycyl lysine isopeptide (Lys-Gly) (interchain with G-Cter in ubiquitin)" evidence="9">
    <location>
        <position position="278"/>
    </location>
</feature>
<feature type="cross-link" description="Glycyl lysine isopeptide (Lys-Gly) (interchain with G-Cter in ubiquitin)" evidence="2">
    <location>
        <position position="285"/>
    </location>
</feature>
<feature type="cross-link" description="Glycyl lysine isopeptide (Lys-Gly) (interchain with G-Cter in ubiquitin)" evidence="2">
    <location>
        <position position="295"/>
    </location>
</feature>
<feature type="cross-link" description="Glycyl lysine isopeptide (Lys-Gly) (interchain with G-Cter in SUMO); alternate" evidence="1">
    <location>
        <position position="302"/>
    </location>
</feature>
<feature type="cross-link" description="Glycyl lysine isopeptide (Lys-Gly) (interchain with G-Cter in ubiquitin); alternate" evidence="2">
    <location>
        <position position="302"/>
    </location>
</feature>
<feature type="cross-link" description="Glycyl lysine isopeptide (Lys-Gly) (interchain with G-Cter in ubiquitin)" evidence="9">
    <location>
        <position position="314"/>
    </location>
</feature>
<feature type="cross-link" description="Glycyl lysine isopeptide (Lys-Gly) (interchain with G-Cter in ubiquitin)" evidence="9">
    <location>
        <position position="318"/>
    </location>
</feature>
<feature type="cross-link" description="Glycyl lysine isopeptide (Lys-Gly) (interchain with G-Cter in ubiquitin)" evidence="9">
    <location>
        <position position="319"/>
    </location>
</feature>
<feature type="cross-link" description="Glycyl lysine isopeptide (Lys-Gly) (interchain with G-Cter in ubiquitin)" evidence="9">
    <location>
        <position position="392"/>
    </location>
</feature>
<feature type="mutagenesis site" description="Slight decrease in TRAF6-induced polyubiquitination." evidence="9">
    <original>K</original>
    <variation>R</variation>
    <location>
        <position position="278"/>
    </location>
</feature>
<feature type="mutagenesis site" description="Abolishes linear polyubiquitin-binding, impairs 'Lys-63'-linked polyubiquitin-binding and impairs NF-kappa-B activation; when associated with A-301 and A-302." evidence="10">
    <original>V</original>
    <variation>A</variation>
    <location>
        <position position="293"/>
    </location>
</feature>
<feature type="mutagenesis site" description="Abolishes linear polyubiquitin-binding, impairs 'Lys-63'-linked polyubiquitin-binding and impairs NF-kappa-B activation; when associated with A-293 and A-302." evidence="10">
    <original>Y</original>
    <variation>A</variation>
    <location>
        <position position="301"/>
    </location>
</feature>
<feature type="mutagenesis site" description="Abolishes linear polyubiquitin-binding, impairs 'Lys-63'-linked polyubiquitin-binding and impairs NF-kappa-B activation; when associated with A-293 and A-301." evidence="10">
    <original>K</original>
    <variation>A</variation>
    <location>
        <position position="302"/>
    </location>
</feature>
<feature type="mutagenesis site" description="Abolishes linear polyubiquitin-binding, impairs 'Lys-63'-linked polyubiquitin-binding and impairs of NF-kappa-B activation." evidence="10">
    <original>F</original>
    <variation>A</variation>
    <location>
        <position position="305"/>
    </location>
</feature>
<feature type="mutagenesis site" description="Abolishes linear polyubiquitin-binding, no effect on 'Lys-63'-linked polyubiquitin-binding and impairs NF-kappa-B activation; when associated with A-312 and A-313." evidence="10">
    <original>R</original>
    <variation>A</variation>
    <location>
        <position position="309"/>
    </location>
</feature>
<feature type="mutagenesis site" description="Abolishes linear polyubiquitin-binding, no effect on 'Lys-63'-linked polyubiquitin-binding and impairs NF-kappa-B activation; when associated with A-309 and A-313." evidence="10">
    <original>R</original>
    <variation>A</variation>
    <location>
        <position position="312"/>
    </location>
</feature>
<feature type="mutagenesis site" description="Impairs linear polyubiquitin-binding. Abolishes linear polyubiquitin-binding, no effect on 'Lys-63'-linked polyubiquitin-binding and impairs NF-kappa-B activation; when associated with A-309 and A-312. Abolishes linear polyubiquitin-binding; when associated with A-317 and A-320." evidence="10">
    <original>E</original>
    <variation>A</variation>
    <location>
        <position position="313"/>
    </location>
</feature>
<feature type="mutagenesis site" description="Slight decrease in TRAF6-induced polyubiquitination. Important decrease in TRAF6-induced polyubiquitination; when associated with R-318 and R-319." evidence="9">
    <original>K</original>
    <variation>R</variation>
    <location>
        <position position="314"/>
    </location>
</feature>
<feature type="mutagenesis site" description="Loss of interaction with TRAF6 and TRAF6-induced polyubiquitination." evidence="9">
    <original>V</original>
    <variation>P</variation>
    <location>
        <position position="316"/>
    </location>
</feature>
<feature type="mutagenesis site" description="Abolishes linear polyubiquitin-binding; when associated with A-313 and A-320." evidence="10">
    <original>E</original>
    <variation>A</variation>
    <location>
        <position position="317"/>
    </location>
</feature>
<feature type="mutagenesis site" description="Slight decrease in TRAF6-induced polyubiquitination. Decrease in TRAF6-induced polyubiquitination; when associated with R-319. Important decrease in TRAF6-induced polyubiquitination; when associated with R-314 and R-319." evidence="9">
    <original>K</original>
    <variation>R</variation>
    <location>
        <position position="318"/>
    </location>
</feature>
<feature type="mutagenesis site" description="Slight decrease in TRAF6-induced polyubiquitination. Decrease in TRAF6-induced polyubiquitination; when associated with R-318. Important decrease in TRAF6-induced polyubiquitination; when associated with R-314 and R-318." evidence="9">
    <original>K</original>
    <variation>R</variation>
    <location>
        <position position="319"/>
    </location>
</feature>
<feature type="mutagenesis site" description="Abolishes linear polyubiquitin-binding; when associated with A-313 and A-317." evidence="10">
    <original>E</original>
    <variation>A</variation>
    <location>
        <position position="320"/>
    </location>
</feature>
<feature type="mutagenesis site" description="Decreases phosphorylation and increases NF-kappa-B activity." evidence="7">
    <original>S</original>
    <variation>A</variation>
    <location>
        <position position="369"/>
    </location>
</feature>
<feature type="mutagenesis site" description="Decreases phosphorylation and increases NF-kappa-B activity." evidence="7">
    <original>S</original>
    <variation>A</variation>
    <location>
        <position position="375"/>
    </location>
</feature>
<feature type="mutagenesis site" description="40% decrease in IL1-induced NF-kappa-B activation." evidence="9">
    <original>K</original>
    <variation>R</variation>
    <location>
        <position position="392"/>
    </location>
</feature>
<feature type="sequence conflict" description="In Ref. 1; AAC40153." evidence="16" ref="1">
    <original>M</original>
    <variation>T</variation>
    <location>
        <position position="13"/>
    </location>
</feature>
<feature type="helix" evidence="19">
    <location>
        <begin position="253"/>
        <end position="289"/>
    </location>
</feature>
<feature type="helix" evidence="19">
    <location>
        <begin position="291"/>
        <end position="333"/>
    </location>
</feature>
<feature type="helix" evidence="18">
    <location>
        <begin position="337"/>
        <end position="340"/>
    </location>
</feature>
<reference key="1">
    <citation type="journal article" date="1998" name="Cell">
        <title>Complementation cloning of NEMO, a component of the I-kappaB kinase complex essential for NF-kappaB activation.</title>
        <authorList>
            <person name="Yamaoka S."/>
            <person name="Courtois G."/>
            <person name="Bessia C."/>
            <person name="Whiteside S.T."/>
            <person name="Weil R."/>
            <person name="Agou F."/>
            <person name="Kirk H.E."/>
            <person name="Kay R.J."/>
            <person name="Israel A."/>
        </authorList>
    </citation>
    <scope>NUCLEOTIDE SEQUENCE [MRNA]</scope>
    <scope>FUNCTION</scope>
    <source>
        <tissue>T-cell</tissue>
    </source>
</reference>
<reference key="2">
    <citation type="journal article" date="2001" name="Gene">
        <title>Human-mouse comparative sequence analysis of the NEMO gene reveals an alternative promoter within the neighboring G6PD gene.</title>
        <authorList>
            <person name="Galgoczy P."/>
            <person name="Rosenthal A."/>
            <person name="Platzer M."/>
        </authorList>
    </citation>
    <scope>NUCLEOTIDE SEQUENCE [GENOMIC DNA]</scope>
</reference>
<reference key="3">
    <citation type="submission" date="2002-05" db="EMBL/GenBank/DDBJ databases">
        <title>Ikbkg gene modulates the herpes virus susceptibility in mice.</title>
        <authorList>
            <person name="Perelygin A.A."/>
            <person name="Perelygina L.M."/>
        </authorList>
    </citation>
    <scope>NUCLEOTIDE SEQUENCE [MRNA]</scope>
    <source>
        <strain>BALB/cJ</strain>
        <tissue>Liver</tissue>
    </source>
</reference>
<reference key="4">
    <citation type="journal article" date="2005" name="Science">
        <title>The transcriptional landscape of the mammalian genome.</title>
        <authorList>
            <person name="Carninci P."/>
            <person name="Kasukawa T."/>
            <person name="Katayama S."/>
            <person name="Gough J."/>
            <person name="Frith M.C."/>
            <person name="Maeda N."/>
            <person name="Oyama R."/>
            <person name="Ravasi T."/>
            <person name="Lenhard B."/>
            <person name="Wells C."/>
            <person name="Kodzius R."/>
            <person name="Shimokawa K."/>
            <person name="Bajic V.B."/>
            <person name="Brenner S.E."/>
            <person name="Batalov S."/>
            <person name="Forrest A.R."/>
            <person name="Zavolan M."/>
            <person name="Davis M.J."/>
            <person name="Wilming L.G."/>
            <person name="Aidinis V."/>
            <person name="Allen J.E."/>
            <person name="Ambesi-Impiombato A."/>
            <person name="Apweiler R."/>
            <person name="Aturaliya R.N."/>
            <person name="Bailey T.L."/>
            <person name="Bansal M."/>
            <person name="Baxter L."/>
            <person name="Beisel K.W."/>
            <person name="Bersano T."/>
            <person name="Bono H."/>
            <person name="Chalk A.M."/>
            <person name="Chiu K.P."/>
            <person name="Choudhary V."/>
            <person name="Christoffels A."/>
            <person name="Clutterbuck D.R."/>
            <person name="Crowe M.L."/>
            <person name="Dalla E."/>
            <person name="Dalrymple B.P."/>
            <person name="de Bono B."/>
            <person name="Della Gatta G."/>
            <person name="di Bernardo D."/>
            <person name="Down T."/>
            <person name="Engstrom P."/>
            <person name="Fagiolini M."/>
            <person name="Faulkner G."/>
            <person name="Fletcher C.F."/>
            <person name="Fukushima T."/>
            <person name="Furuno M."/>
            <person name="Futaki S."/>
            <person name="Gariboldi M."/>
            <person name="Georgii-Hemming P."/>
            <person name="Gingeras T.R."/>
            <person name="Gojobori T."/>
            <person name="Green R.E."/>
            <person name="Gustincich S."/>
            <person name="Harbers M."/>
            <person name="Hayashi Y."/>
            <person name="Hensch T.K."/>
            <person name="Hirokawa N."/>
            <person name="Hill D."/>
            <person name="Huminiecki L."/>
            <person name="Iacono M."/>
            <person name="Ikeo K."/>
            <person name="Iwama A."/>
            <person name="Ishikawa T."/>
            <person name="Jakt M."/>
            <person name="Kanapin A."/>
            <person name="Katoh M."/>
            <person name="Kawasawa Y."/>
            <person name="Kelso J."/>
            <person name="Kitamura H."/>
            <person name="Kitano H."/>
            <person name="Kollias G."/>
            <person name="Krishnan S.P."/>
            <person name="Kruger A."/>
            <person name="Kummerfeld S.K."/>
            <person name="Kurochkin I.V."/>
            <person name="Lareau L.F."/>
            <person name="Lazarevic D."/>
            <person name="Lipovich L."/>
            <person name="Liu J."/>
            <person name="Liuni S."/>
            <person name="McWilliam S."/>
            <person name="Madan Babu M."/>
            <person name="Madera M."/>
            <person name="Marchionni L."/>
            <person name="Matsuda H."/>
            <person name="Matsuzawa S."/>
            <person name="Miki H."/>
            <person name="Mignone F."/>
            <person name="Miyake S."/>
            <person name="Morris K."/>
            <person name="Mottagui-Tabar S."/>
            <person name="Mulder N."/>
            <person name="Nakano N."/>
            <person name="Nakauchi H."/>
            <person name="Ng P."/>
            <person name="Nilsson R."/>
            <person name="Nishiguchi S."/>
            <person name="Nishikawa S."/>
            <person name="Nori F."/>
            <person name="Ohara O."/>
            <person name="Okazaki Y."/>
            <person name="Orlando V."/>
            <person name="Pang K.C."/>
            <person name="Pavan W.J."/>
            <person name="Pavesi G."/>
            <person name="Pesole G."/>
            <person name="Petrovsky N."/>
            <person name="Piazza S."/>
            <person name="Reed J."/>
            <person name="Reid J.F."/>
            <person name="Ring B.Z."/>
            <person name="Ringwald M."/>
            <person name="Rost B."/>
            <person name="Ruan Y."/>
            <person name="Salzberg S.L."/>
            <person name="Sandelin A."/>
            <person name="Schneider C."/>
            <person name="Schoenbach C."/>
            <person name="Sekiguchi K."/>
            <person name="Semple C.A."/>
            <person name="Seno S."/>
            <person name="Sessa L."/>
            <person name="Sheng Y."/>
            <person name="Shibata Y."/>
            <person name="Shimada H."/>
            <person name="Shimada K."/>
            <person name="Silva D."/>
            <person name="Sinclair B."/>
            <person name="Sperling S."/>
            <person name="Stupka E."/>
            <person name="Sugiura K."/>
            <person name="Sultana R."/>
            <person name="Takenaka Y."/>
            <person name="Taki K."/>
            <person name="Tammoja K."/>
            <person name="Tan S.L."/>
            <person name="Tang S."/>
            <person name="Taylor M.S."/>
            <person name="Tegner J."/>
            <person name="Teichmann S.A."/>
            <person name="Ueda H.R."/>
            <person name="van Nimwegen E."/>
            <person name="Verardo R."/>
            <person name="Wei C.L."/>
            <person name="Yagi K."/>
            <person name="Yamanishi H."/>
            <person name="Zabarovsky E."/>
            <person name="Zhu S."/>
            <person name="Zimmer A."/>
            <person name="Hide W."/>
            <person name="Bult C."/>
            <person name="Grimmond S.M."/>
            <person name="Teasdale R.D."/>
            <person name="Liu E.T."/>
            <person name="Brusic V."/>
            <person name="Quackenbush J."/>
            <person name="Wahlestedt C."/>
            <person name="Mattick J.S."/>
            <person name="Hume D.A."/>
            <person name="Kai C."/>
            <person name="Sasaki D."/>
            <person name="Tomaru Y."/>
            <person name="Fukuda S."/>
            <person name="Kanamori-Katayama M."/>
            <person name="Suzuki M."/>
            <person name="Aoki J."/>
            <person name="Arakawa T."/>
            <person name="Iida J."/>
            <person name="Imamura K."/>
            <person name="Itoh M."/>
            <person name="Kato T."/>
            <person name="Kawaji H."/>
            <person name="Kawagashira N."/>
            <person name="Kawashima T."/>
            <person name="Kojima M."/>
            <person name="Kondo S."/>
            <person name="Konno H."/>
            <person name="Nakano K."/>
            <person name="Ninomiya N."/>
            <person name="Nishio T."/>
            <person name="Okada M."/>
            <person name="Plessy C."/>
            <person name="Shibata K."/>
            <person name="Shiraki T."/>
            <person name="Suzuki S."/>
            <person name="Tagami M."/>
            <person name="Waki K."/>
            <person name="Watahiki A."/>
            <person name="Okamura-Oho Y."/>
            <person name="Suzuki H."/>
            <person name="Kawai J."/>
            <person name="Hayashizaki Y."/>
        </authorList>
    </citation>
    <scope>NUCLEOTIDE SEQUENCE [LARGE SCALE MRNA]</scope>
    <source>
        <strain>NOD</strain>
    </source>
</reference>
<reference key="5">
    <citation type="journal article" date="2009" name="PLoS Biol.">
        <title>Lineage-specific biology revealed by a finished genome assembly of the mouse.</title>
        <authorList>
            <person name="Church D.M."/>
            <person name="Goodstadt L."/>
            <person name="Hillier L.W."/>
            <person name="Zody M.C."/>
            <person name="Goldstein S."/>
            <person name="She X."/>
            <person name="Bult C.J."/>
            <person name="Agarwala R."/>
            <person name="Cherry J.L."/>
            <person name="DiCuccio M."/>
            <person name="Hlavina W."/>
            <person name="Kapustin Y."/>
            <person name="Meric P."/>
            <person name="Maglott D."/>
            <person name="Birtle Z."/>
            <person name="Marques A.C."/>
            <person name="Graves T."/>
            <person name="Zhou S."/>
            <person name="Teague B."/>
            <person name="Potamousis K."/>
            <person name="Churas C."/>
            <person name="Place M."/>
            <person name="Herschleb J."/>
            <person name="Runnheim R."/>
            <person name="Forrest D."/>
            <person name="Amos-Landgraf J."/>
            <person name="Schwartz D.C."/>
            <person name="Cheng Z."/>
            <person name="Lindblad-Toh K."/>
            <person name="Eichler E.E."/>
            <person name="Ponting C.P."/>
        </authorList>
    </citation>
    <scope>NUCLEOTIDE SEQUENCE [LARGE SCALE GENOMIC DNA]</scope>
    <source>
        <strain>C57BL/6J</strain>
    </source>
</reference>
<reference key="6">
    <citation type="submission" date="2005-07" db="EMBL/GenBank/DDBJ databases">
        <authorList>
            <person name="Mural R.J."/>
            <person name="Adams M.D."/>
            <person name="Myers E.W."/>
            <person name="Smith H.O."/>
            <person name="Venter J.C."/>
        </authorList>
    </citation>
    <scope>NUCLEOTIDE SEQUENCE [LARGE SCALE GENOMIC DNA]</scope>
</reference>
<reference key="7">
    <citation type="journal article" date="1999" name="Mol. Cell. Biol.">
        <title>IkappaB kinase (IKK)-associated protein 1, a common component of the heterogeneous IKK complex.</title>
        <authorList>
            <person name="Mercurio F."/>
            <person name="Murray B.W."/>
            <person name="Shevchenko A."/>
            <person name="Bennett B.L."/>
            <person name="Young D.B."/>
            <person name="Li J.W."/>
            <person name="Pascual G."/>
            <person name="Motiwala A."/>
            <person name="Zhu H."/>
            <person name="Mann M."/>
            <person name="Manning A.M."/>
        </authorList>
    </citation>
    <scope>NUCLEOTIDE SEQUENCE [MRNA] OF 85-412</scope>
    <scope>PROTEIN SEQUENCE OF 144-159</scope>
    <source>
        <tissue>Cervix carcinoma</tissue>
    </source>
</reference>
<reference key="8">
    <citation type="journal article" date="1999" name="Proc. Natl. Acad. Sci. U.S.A.">
        <title>Identification of a cell protein (FIP-3) as a modulator of NF-kappaB activity and as a target of an adenovirus inhibitor of tumor necrosis factor alpha-induced apoptosis.</title>
        <authorList>
            <person name="Li Y."/>
            <person name="Kang J."/>
            <person name="Friedman J."/>
            <person name="Tarassishin L."/>
            <person name="Ye J."/>
            <person name="Kovalenko A."/>
            <person name="Wallach D."/>
            <person name="Horwitz M.S."/>
        </authorList>
    </citation>
    <scope>FUNCTION</scope>
</reference>
<reference key="9">
    <citation type="journal article" date="2001" name="J. Biol. Chem.">
        <title>Role of ikkgamma/nemo in assembly of the IkappaB kinase complex.</title>
        <authorList>
            <person name="Li X.-H."/>
            <person name="Fang X."/>
            <person name="Gaynor R.B."/>
        </authorList>
    </citation>
    <scope>IKK COMPLEX</scope>
    <scope>SUBUNIT</scope>
</reference>
<reference key="10">
    <citation type="journal article" date="2002" name="J. Biol. Chem.">
        <title>Regulation of Ikappa B kinase (IKK)gamma /NEMO function by IKKbeta -mediated phosphorylation.</title>
        <authorList>
            <person name="Prajapati S."/>
            <person name="Gaynor R.B."/>
        </authorList>
    </citation>
    <scope>PHOSPHORYLATION AT SER-369</scope>
    <scope>MUTAGENESIS OF SER-369 AND SER-375</scope>
</reference>
<reference key="11">
    <citation type="journal article" date="2002" name="J. Biol. Chem.">
        <title>Association of the adaptor TANK with the I kappa B kinase (IKK) regulator NEMO connects IKK complexes with IKK epsilon and TBK1 kinases.</title>
        <authorList>
            <person name="Chariot A."/>
            <person name="Leonardi A."/>
            <person name="Muller J."/>
            <person name="Bonif M."/>
            <person name="Brown K."/>
            <person name="Siebenlist U."/>
        </authorList>
    </citation>
    <scope>INTERACTION WITH TANK AND IKBKB</scope>
</reference>
<reference key="12">
    <citation type="journal article" date="2006" name="J. Biol. Chem.">
        <title>ABIN-1 binds to NEMO/IKKgamma and co-operates with A20 in inhibiting NF-kappaB.</title>
        <authorList>
            <person name="Mauro C."/>
            <person name="Pacifico F."/>
            <person name="Lavorgna A."/>
            <person name="Mellone S."/>
            <person name="Iannetti A."/>
            <person name="Acquaviva R."/>
            <person name="Formisano S."/>
            <person name="Vito P."/>
            <person name="Leonardi A."/>
        </authorList>
    </citation>
    <scope>INTERACTION WITH TNIP1 AND TNFAIP3</scope>
</reference>
<reference key="13">
    <citation type="journal article" date="2007" name="Hum. Mol. Genet.">
        <title>Identification of TRAF6-dependent NEMO polyubiquitination sites through analysis of a new NEMO mutation causing incontinentia pigmenti.</title>
        <authorList>
            <person name="Sebban-Benin H."/>
            <person name="Pescatore A."/>
            <person name="Fusco F."/>
            <person name="Pascuale V."/>
            <person name="Gautheron J."/>
            <person name="Yamaoka S."/>
            <person name="Moncla A."/>
            <person name="Ursini M.V."/>
            <person name="Courtois G."/>
        </authorList>
    </citation>
    <scope>UBIQUITINATION AT LYS-278; LYS-314; LYS-318; LYS-319 AND LYS-392</scope>
    <scope>MUTAGENESIS OF LYS-278; LYS-314; VAL-316; LYS-318; LYS-319 AND LYS-392</scope>
</reference>
<reference key="14">
    <citation type="journal article" date="2010" name="Cell">
        <title>A tissue-specific atlas of mouse protein phosphorylation and expression.</title>
        <authorList>
            <person name="Huttlin E.L."/>
            <person name="Jedrychowski M.P."/>
            <person name="Elias J.E."/>
            <person name="Goswami T."/>
            <person name="Rad R."/>
            <person name="Beausoleil S.A."/>
            <person name="Villen J."/>
            <person name="Haas W."/>
            <person name="Sowa M.E."/>
            <person name="Gygi S.P."/>
        </authorList>
    </citation>
    <scope>PHOSPHORYLATION [LARGE SCALE ANALYSIS] AT SER-380</scope>
    <scope>IDENTIFICATION BY MASS SPECTROMETRY [LARGE SCALE ANALYSIS]</scope>
    <source>
        <tissue>Kidney</tissue>
        <tissue>Lung</tissue>
        <tissue>Spleen</tissue>
    </source>
</reference>
<reference key="15">
    <citation type="journal article" date="2010" name="Nat. Cell Biol.">
        <title>Telomere-independent Rap1 is an IKK adaptor and regulates NF-kappaB-dependent gene expression.</title>
        <authorList>
            <person name="Teo H."/>
            <person name="Ghosh S."/>
            <person name="Luesch H."/>
            <person name="Ghosh A."/>
            <person name="Wong E.T."/>
            <person name="Malik N."/>
            <person name="Orth A."/>
            <person name="de Jesus P."/>
            <person name="Perry A.S."/>
            <person name="Oliver J.D."/>
            <person name="Tran N.L."/>
            <person name="Speiser L.J."/>
            <person name="Wong M."/>
            <person name="Saez E."/>
            <person name="Schultz P."/>
            <person name="Chanda S.K."/>
            <person name="Verma I.M."/>
            <person name="Tergaonkar V."/>
        </authorList>
    </citation>
    <scope>INTERACTION WITH TERF2IP</scope>
</reference>
<reference key="16">
    <citation type="journal article" date="2019" name="Nat. Commun.">
        <title>Ubiquitination of RIPK1 suppresses programmed cell death by regulating RIPK1 kinase activation during embryogenesis.</title>
        <authorList>
            <person name="Zhang X."/>
            <person name="Zhang H."/>
            <person name="Xu C."/>
            <person name="Li X."/>
            <person name="Li M."/>
            <person name="Wu X."/>
            <person name="Pu W."/>
            <person name="Zhou B."/>
            <person name="Wang H."/>
            <person name="Li D."/>
            <person name="Ding Q."/>
            <person name="Ying H."/>
            <person name="Wang H."/>
            <person name="Zhang H."/>
        </authorList>
    </citation>
    <scope>INTERACTION WITH RIPK1</scope>
</reference>
<reference key="17">
    <citation type="journal article" date="2020" name="EMBO J.">
        <title>Negative regulation of NEMO signaling by the ubiquitin E3 ligase MARCH2.</title>
        <authorList>
            <person name="Chathuranga K."/>
            <person name="Kim T.H."/>
            <person name="Lee H."/>
            <person name="Park J.S."/>
            <person name="Kim J.H."/>
            <person name="Chathuranga W.A.G."/>
            <person name="Ekanayaka P."/>
            <person name="Choi Y.J."/>
            <person name="Lee C.H."/>
            <person name="Kim C.J."/>
            <person name="Jung J.U."/>
            <person name="Lee J.S."/>
        </authorList>
    </citation>
    <scope>INTERACTION WITH MARCHF2</scope>
</reference>
<reference key="18">
    <citation type="journal article" date="2009" name="Cell">
        <title>Specific recognition of linear ubiquitin chains by NEMO is important for NF-kappaB activation.</title>
        <authorList>
            <person name="Rahighi S."/>
            <person name="Ikeda F."/>
            <person name="Kawasaki M."/>
            <person name="Akutsu M."/>
            <person name="Suzuki N."/>
            <person name="Kato R."/>
            <person name="Kensche T."/>
            <person name="Uejima T."/>
            <person name="Bloor S."/>
            <person name="Komander D."/>
            <person name="Randow F."/>
            <person name="Wakatsuki S."/>
            <person name="Dikic I."/>
        </authorList>
    </citation>
    <scope>X-RAY CRYSTALLOGRAPHY (2.7 ANGSTROMS) OF 250-343 IN COMPLEX WITH UBIQUITIN</scope>
    <scope>UBIQUITIN-BINDING</scope>
    <scope>MUTAGENESIS OF VAL-293; TYR-301; LYS-302; PHE-305; ARG-309; ARG-312; GLU-313; GLU-313; GLU-317 AND GLU-320</scope>
</reference>
<reference key="19">
    <citation type="journal article" date="2010" name="J. Mol. Biol.">
        <title>DARPin-assisted crystallography of the CC2-LZ domain of NEMO reveals a coupling between dimerization and ubiquitin binding.</title>
        <authorList>
            <person name="Grubisha O."/>
            <person name="Kaminska M."/>
            <person name="Duquerroy S."/>
            <person name="Fontan E."/>
            <person name="Cordier F."/>
            <person name="Haouz A."/>
            <person name="Raynal B."/>
            <person name="Chiaravalli J."/>
            <person name="Delepierre M."/>
            <person name="Israel A."/>
            <person name="Veron M."/>
            <person name="Agou F."/>
        </authorList>
    </citation>
    <scope>X-RAY CRYSTALLOGRAPHY (2.9 ANGSTROMS) OF 251-337</scope>
    <scope>UBIQUITIN-BINDING</scope>
    <scope>OLIGOMETRIZATION</scope>
</reference>
<proteinExistence type="evidence at protein level"/>
<protein>
    <recommendedName>
        <fullName>NF-kappa-B essential modulator</fullName>
        <shortName>NEMO</shortName>
    </recommendedName>
    <alternativeName>
        <fullName>IkB kinase-associated protein 1</fullName>
        <shortName>IKKAP1</shortName>
        <shortName>mFIP-3</shortName>
    </alternativeName>
    <alternativeName>
        <fullName>Inhibitor of nuclear factor kappa-B kinase subunit gamma</fullName>
        <shortName>I-kappa-B kinase subunit gamma</shortName>
        <shortName>IKK-gamma</shortName>
        <shortName>IKKG</shortName>
        <shortName>IkB kinase subunit gamma</shortName>
    </alternativeName>
    <alternativeName>
        <fullName>NF-kappa-B essential modifier</fullName>
    </alternativeName>
</protein>
<keyword id="KW-0002">3D-structure</keyword>
<keyword id="KW-0175">Coiled coil</keyword>
<keyword id="KW-0963">Cytoplasm</keyword>
<keyword id="KW-0903">Direct protein sequencing</keyword>
<keyword id="KW-1015">Disulfide bond</keyword>
<keyword id="KW-0227">DNA damage</keyword>
<keyword id="KW-1017">Isopeptide bond</keyword>
<keyword id="KW-0479">Metal-binding</keyword>
<keyword id="KW-0539">Nucleus</keyword>
<keyword id="KW-0597">Phosphoprotein</keyword>
<keyword id="KW-1185">Reference proteome</keyword>
<keyword id="KW-0804">Transcription</keyword>
<keyword id="KW-0805">Transcription regulation</keyword>
<keyword id="KW-0832">Ubl conjugation</keyword>
<keyword id="KW-0862">Zinc</keyword>
<keyword id="KW-0863">Zinc-finger</keyword>